<organism>
    <name type="scientific">Cryptococcus neoformans var. neoformans serotype D (strain B-3501A)</name>
    <name type="common">Filobasidiella neoformans</name>
    <dbReference type="NCBI Taxonomy" id="283643"/>
    <lineage>
        <taxon>Eukaryota</taxon>
        <taxon>Fungi</taxon>
        <taxon>Dikarya</taxon>
        <taxon>Basidiomycota</taxon>
        <taxon>Agaricomycotina</taxon>
        <taxon>Tremellomycetes</taxon>
        <taxon>Tremellales</taxon>
        <taxon>Cryptococcaceae</taxon>
        <taxon>Cryptococcus</taxon>
        <taxon>Cryptococcus neoformans species complex</taxon>
    </lineage>
</organism>
<name>CSN12_CRYNB</name>
<proteinExistence type="inferred from homology"/>
<accession>P0CR49</accession>
<accession>Q55KP8</accession>
<accession>Q5KAS8</accession>
<sequence>MKYQQFVNSFTHPLQHEDHTPLLRLLSVHGKAAKGIADTVGAIDEKRLKNPGHTLPDLWDEIAVRHCACVYALYKTKDYTEAFNQQDKLLSLFYRWFVDQSSWVLPVLYMMLSDLRDLAEQADQTIHAETGKMPSLEICTRTVSKAFSLCATDRQFKGEESRRRGVYHTACLTIKCYFKVGKPNLCKNIIRAVVSDPKTPSVDTAPLPDQVTWHFYIGMLAFLNGEDKKADEELSWALKHCPADAKRNQELILTYLIPLRLLHGRFPSASLLSQHPRLELVFTPFINAIKNGDVEEYDRRLEWAQVRLVGMSVWLVVERAREGCLRSLFKKAWMASDKSTRVPIETFRLALKLHGVDVESDEVECMVANMIYRGYLKGYISHEKKMVVLGKTNPFPKMSTIAR</sequence>
<dbReference type="EMBL" id="AAEY01000050">
    <property type="protein sequence ID" value="EAL18362.1"/>
    <property type="molecule type" value="Genomic_DNA"/>
</dbReference>
<dbReference type="RefSeq" id="XP_773009.1">
    <property type="nucleotide sequence ID" value="XM_767916.1"/>
</dbReference>
<dbReference type="SMR" id="P0CR49"/>
<dbReference type="EnsemblFungi" id="AAW45800">
    <property type="protein sequence ID" value="AAW45800"/>
    <property type="gene ID" value="CNJ00640"/>
</dbReference>
<dbReference type="GeneID" id="4938628"/>
<dbReference type="KEGG" id="cnb:CNBJ2850"/>
<dbReference type="VEuPathDB" id="FungiDB:CNBJ2850"/>
<dbReference type="HOGENOM" id="CLU_031567_2_1_1"/>
<dbReference type="OrthoDB" id="3012at5206"/>
<dbReference type="GO" id="GO:0070390">
    <property type="term" value="C:transcription export complex 2"/>
    <property type="evidence" value="ECO:0007669"/>
    <property type="project" value="TreeGrafter"/>
</dbReference>
<dbReference type="GO" id="GO:0003690">
    <property type="term" value="F:double-stranded DNA binding"/>
    <property type="evidence" value="ECO:0007669"/>
    <property type="project" value="InterPro"/>
</dbReference>
<dbReference type="GO" id="GO:0003723">
    <property type="term" value="F:RNA binding"/>
    <property type="evidence" value="ECO:0007669"/>
    <property type="project" value="InterPro"/>
</dbReference>
<dbReference type="GO" id="GO:0016973">
    <property type="term" value="P:poly(A)+ mRNA export from nucleus"/>
    <property type="evidence" value="ECO:0007669"/>
    <property type="project" value="TreeGrafter"/>
</dbReference>
<dbReference type="GO" id="GO:0000973">
    <property type="term" value="P:post-transcriptional tethering of RNA polymerase II gene DNA at nuclear periphery"/>
    <property type="evidence" value="ECO:0007669"/>
    <property type="project" value="TreeGrafter"/>
</dbReference>
<dbReference type="GO" id="GO:0006368">
    <property type="term" value="P:transcription elongation by RNA polymerase II"/>
    <property type="evidence" value="ECO:0007669"/>
    <property type="project" value="TreeGrafter"/>
</dbReference>
<dbReference type="FunFam" id="1.10.10.10:FF:000146">
    <property type="entry name" value="PCI domain-containing protein 2 homolog"/>
    <property type="match status" value="1"/>
</dbReference>
<dbReference type="Gene3D" id="1.10.10.10">
    <property type="entry name" value="Winged helix-like DNA-binding domain superfamily/Winged helix DNA-binding domain"/>
    <property type="match status" value="1"/>
</dbReference>
<dbReference type="InterPro" id="IPR045114">
    <property type="entry name" value="Csn12-like"/>
</dbReference>
<dbReference type="InterPro" id="IPR000717">
    <property type="entry name" value="PCI_dom"/>
</dbReference>
<dbReference type="InterPro" id="IPR036388">
    <property type="entry name" value="WH-like_DNA-bd_sf"/>
</dbReference>
<dbReference type="PANTHER" id="PTHR12732:SF0">
    <property type="entry name" value="PCI DOMAIN-CONTAINING PROTEIN 2"/>
    <property type="match status" value="1"/>
</dbReference>
<dbReference type="PANTHER" id="PTHR12732">
    <property type="entry name" value="UNCHARACTERIZED PROTEASOME COMPONENT REGION PCI-CONTAINING"/>
    <property type="match status" value="1"/>
</dbReference>
<dbReference type="Pfam" id="PF01399">
    <property type="entry name" value="PCI"/>
    <property type="match status" value="1"/>
</dbReference>
<dbReference type="SMART" id="SM00753">
    <property type="entry name" value="PAM"/>
    <property type="match status" value="1"/>
</dbReference>
<dbReference type="PROSITE" id="PS50250">
    <property type="entry name" value="PCI"/>
    <property type="match status" value="1"/>
</dbReference>
<feature type="chain" id="PRO_0000410286" description="Protein CSN12 homolog">
    <location>
        <begin position="1"/>
        <end position="403"/>
    </location>
</feature>
<feature type="domain" description="PCI" evidence="1">
    <location>
        <begin position="211"/>
        <end position="394"/>
    </location>
</feature>
<gene>
    <name type="primary">CSN12</name>
    <name type="ordered locus">CNBJ2850</name>
</gene>
<protein>
    <recommendedName>
        <fullName>Protein CSN12 homolog</fullName>
    </recommendedName>
</protein>
<evidence type="ECO:0000255" key="1">
    <source>
        <dbReference type="PROSITE-ProRule" id="PRU01185"/>
    </source>
</evidence>
<evidence type="ECO:0000305" key="2"/>
<reference key="1">
    <citation type="journal article" date="2005" name="Science">
        <title>The genome of the basidiomycetous yeast and human pathogen Cryptococcus neoformans.</title>
        <authorList>
            <person name="Loftus B.J."/>
            <person name="Fung E."/>
            <person name="Roncaglia P."/>
            <person name="Rowley D."/>
            <person name="Amedeo P."/>
            <person name="Bruno D."/>
            <person name="Vamathevan J."/>
            <person name="Miranda M."/>
            <person name="Anderson I.J."/>
            <person name="Fraser J.A."/>
            <person name="Allen J.E."/>
            <person name="Bosdet I.E."/>
            <person name="Brent M.R."/>
            <person name="Chiu R."/>
            <person name="Doering T.L."/>
            <person name="Donlin M.J."/>
            <person name="D'Souza C.A."/>
            <person name="Fox D.S."/>
            <person name="Grinberg V."/>
            <person name="Fu J."/>
            <person name="Fukushima M."/>
            <person name="Haas B.J."/>
            <person name="Huang J.C."/>
            <person name="Janbon G."/>
            <person name="Jones S.J.M."/>
            <person name="Koo H.L."/>
            <person name="Krzywinski M.I."/>
            <person name="Kwon-Chung K.J."/>
            <person name="Lengeler K.B."/>
            <person name="Maiti R."/>
            <person name="Marra M.A."/>
            <person name="Marra R.E."/>
            <person name="Mathewson C.A."/>
            <person name="Mitchell T.G."/>
            <person name="Pertea M."/>
            <person name="Riggs F.R."/>
            <person name="Salzberg S.L."/>
            <person name="Schein J.E."/>
            <person name="Shvartsbeyn A."/>
            <person name="Shin H."/>
            <person name="Shumway M."/>
            <person name="Specht C.A."/>
            <person name="Suh B.B."/>
            <person name="Tenney A."/>
            <person name="Utterback T.R."/>
            <person name="Wickes B.L."/>
            <person name="Wortman J.R."/>
            <person name="Wye N.H."/>
            <person name="Kronstad J.W."/>
            <person name="Lodge J.K."/>
            <person name="Heitman J."/>
            <person name="Davis R.W."/>
            <person name="Fraser C.M."/>
            <person name="Hyman R.W."/>
        </authorList>
    </citation>
    <scope>NUCLEOTIDE SEQUENCE [LARGE SCALE GENOMIC DNA]</scope>
    <source>
        <strain>B-3501A</strain>
    </source>
</reference>
<comment type="similarity">
    <text evidence="2">Belongs to the CSN12 family.</text>
</comment>